<feature type="initiator methionine" description="Removed" evidence="2">
    <location>
        <position position="1"/>
    </location>
</feature>
<feature type="chain" id="PRO_0000443236" description="Serine/threonine-protein kinase BSK6">
    <location>
        <begin position="2"/>
        <end position="490"/>
    </location>
</feature>
<feature type="domain" description="Protein kinase" evidence="1">
    <location>
        <begin position="56"/>
        <end position="310"/>
    </location>
</feature>
<feature type="active site" description="Proton acceptor" evidence="1">
    <location>
        <position position="178"/>
    </location>
</feature>
<feature type="binding site" evidence="1">
    <location>
        <begin position="62"/>
        <end position="70"/>
    </location>
    <ligand>
        <name>ATP</name>
        <dbReference type="ChEBI" id="CHEBI:30616"/>
    </ligand>
</feature>
<feature type="binding site" evidence="1">
    <location>
        <position position="84"/>
    </location>
    <ligand>
        <name>ATP</name>
        <dbReference type="ChEBI" id="CHEBI:30616"/>
    </ligand>
</feature>
<feature type="modified residue" description="Phosphoserine" evidence="9 10 11">
    <location>
        <position position="25"/>
    </location>
</feature>
<feature type="modified residue" description="Phosphoserine" evidence="10">
    <location>
        <position position="373"/>
    </location>
</feature>
<feature type="lipid moiety-binding region" description="N-myristoyl glycine" evidence="2">
    <location>
        <position position="2"/>
    </location>
</feature>
<feature type="mutagenesis site" description="Slightly reduces BSK6 protein phosphorylation." evidence="3">
    <original>S</original>
    <variation>A</variation>
    <location>
        <position position="210"/>
    </location>
</feature>
<feature type="sequence conflict" description="In Ref. 4; AAM62649." evidence="5" ref="4">
    <original>A</original>
    <variation>T</variation>
    <location>
        <position position="445"/>
    </location>
</feature>
<proteinExistence type="evidence at protein level"/>
<protein>
    <recommendedName>
        <fullName evidence="5">Serine/threonine-protein kinase BSK6</fullName>
        <ecNumber evidence="5">2.7.11.1</ecNumber>
    </recommendedName>
    <alternativeName>
        <fullName evidence="4">Brassinosteroid-signaling kinase 6</fullName>
    </alternativeName>
</protein>
<dbReference type="EC" id="2.7.11.1" evidence="5"/>
<dbReference type="EMBL" id="AL132960">
    <property type="protein sequence ID" value="CAB88365.1"/>
    <property type="molecule type" value="Genomic_DNA"/>
</dbReference>
<dbReference type="EMBL" id="CP002686">
    <property type="protein sequence ID" value="AEE79177.1"/>
    <property type="molecule type" value="Genomic_DNA"/>
</dbReference>
<dbReference type="EMBL" id="AY054503">
    <property type="protein sequence ID" value="AAK96694.1"/>
    <property type="molecule type" value="mRNA"/>
</dbReference>
<dbReference type="EMBL" id="BT002089">
    <property type="protein sequence ID" value="AAN72100.1"/>
    <property type="molecule type" value="mRNA"/>
</dbReference>
<dbReference type="EMBL" id="AY085422">
    <property type="protein sequence ID" value="AAM62649.1"/>
    <property type="molecule type" value="mRNA"/>
</dbReference>
<dbReference type="RefSeq" id="NP_190971.1">
    <property type="nucleotide sequence ID" value="NM_115263.4"/>
</dbReference>
<dbReference type="SMR" id="Q9M324"/>
<dbReference type="FunCoup" id="Q9M324">
    <property type="interactions" value="71"/>
</dbReference>
<dbReference type="STRING" id="3702.Q9M324"/>
<dbReference type="iPTMnet" id="Q9M324"/>
<dbReference type="PaxDb" id="3702-AT3G54030.1"/>
<dbReference type="ProteomicsDB" id="240482"/>
<dbReference type="EnsemblPlants" id="AT3G54030.1">
    <property type="protein sequence ID" value="AT3G54030.1"/>
    <property type="gene ID" value="AT3G54030"/>
</dbReference>
<dbReference type="GeneID" id="824570"/>
<dbReference type="Gramene" id="AT3G54030.1">
    <property type="protein sequence ID" value="AT3G54030.1"/>
    <property type="gene ID" value="AT3G54030"/>
</dbReference>
<dbReference type="KEGG" id="ath:AT3G54030"/>
<dbReference type="Araport" id="AT3G54030"/>
<dbReference type="TAIR" id="AT3G54030">
    <property type="gene designation" value="BSK6"/>
</dbReference>
<dbReference type="eggNOG" id="ENOG502QS12">
    <property type="taxonomic scope" value="Eukaryota"/>
</dbReference>
<dbReference type="HOGENOM" id="CLU_000288_15_0_1"/>
<dbReference type="InParanoid" id="Q9M324"/>
<dbReference type="OMA" id="GQWIAIK"/>
<dbReference type="OrthoDB" id="2335338at2759"/>
<dbReference type="PhylomeDB" id="Q9M324"/>
<dbReference type="PRO" id="PR:Q9M324"/>
<dbReference type="Proteomes" id="UP000006548">
    <property type="component" value="Chromosome 3"/>
</dbReference>
<dbReference type="ExpressionAtlas" id="Q9M324">
    <property type="expression patterns" value="baseline and differential"/>
</dbReference>
<dbReference type="GO" id="GO:0005886">
    <property type="term" value="C:plasma membrane"/>
    <property type="evidence" value="ECO:0007005"/>
    <property type="project" value="TAIR"/>
</dbReference>
<dbReference type="GO" id="GO:0005524">
    <property type="term" value="F:ATP binding"/>
    <property type="evidence" value="ECO:0007669"/>
    <property type="project" value="UniProtKB-KW"/>
</dbReference>
<dbReference type="GO" id="GO:0106310">
    <property type="term" value="F:protein serine kinase activity"/>
    <property type="evidence" value="ECO:0007669"/>
    <property type="project" value="RHEA"/>
</dbReference>
<dbReference type="GO" id="GO:0004674">
    <property type="term" value="F:protein serine/threonine kinase activity"/>
    <property type="evidence" value="ECO:0007669"/>
    <property type="project" value="UniProtKB-KW"/>
</dbReference>
<dbReference type="GO" id="GO:0009742">
    <property type="term" value="P:brassinosteroid mediated signaling pathway"/>
    <property type="evidence" value="ECO:0000315"/>
    <property type="project" value="UniProtKB"/>
</dbReference>
<dbReference type="FunFam" id="1.25.40.10:FF:000016">
    <property type="entry name" value="probable serine/threonine-protein kinase At4g35230"/>
    <property type="match status" value="1"/>
</dbReference>
<dbReference type="FunFam" id="3.30.200.20:FF:000154">
    <property type="entry name" value="probable serine/threonine-protein kinase At4g35230"/>
    <property type="match status" value="1"/>
</dbReference>
<dbReference type="FunFam" id="1.10.510.10:FF:000069">
    <property type="entry name" value="probable serine/threonine-protein kinase At5g41260"/>
    <property type="match status" value="1"/>
</dbReference>
<dbReference type="Gene3D" id="3.30.200.20">
    <property type="entry name" value="Phosphorylase Kinase, domain 1"/>
    <property type="match status" value="1"/>
</dbReference>
<dbReference type="Gene3D" id="1.25.40.10">
    <property type="entry name" value="Tetratricopeptide repeat domain"/>
    <property type="match status" value="1"/>
</dbReference>
<dbReference type="Gene3D" id="1.10.510.10">
    <property type="entry name" value="Transferase(Phosphotransferase) domain 1"/>
    <property type="match status" value="1"/>
</dbReference>
<dbReference type="InterPro" id="IPR045845">
    <property type="entry name" value="BSK"/>
</dbReference>
<dbReference type="InterPro" id="IPR011009">
    <property type="entry name" value="Kinase-like_dom_sf"/>
</dbReference>
<dbReference type="InterPro" id="IPR000719">
    <property type="entry name" value="Prot_kinase_dom"/>
</dbReference>
<dbReference type="InterPro" id="IPR001245">
    <property type="entry name" value="Ser-Thr/Tyr_kinase_cat_dom"/>
</dbReference>
<dbReference type="InterPro" id="IPR011990">
    <property type="entry name" value="TPR-like_helical_dom_sf"/>
</dbReference>
<dbReference type="PANTHER" id="PTHR45863">
    <property type="entry name" value="SERINE/THREONINE-PROTEIN KINASE BSK5"/>
    <property type="match status" value="1"/>
</dbReference>
<dbReference type="PANTHER" id="PTHR45863:SF6">
    <property type="entry name" value="SERINE_THREONINE-PROTEIN KINASE BSK6"/>
    <property type="match status" value="1"/>
</dbReference>
<dbReference type="Pfam" id="PF07714">
    <property type="entry name" value="PK_Tyr_Ser-Thr"/>
    <property type="match status" value="1"/>
</dbReference>
<dbReference type="SUPFAM" id="SSF56112">
    <property type="entry name" value="Protein kinase-like (PK-like)"/>
    <property type="match status" value="1"/>
</dbReference>
<dbReference type="SUPFAM" id="SSF48452">
    <property type="entry name" value="TPR-like"/>
    <property type="match status" value="1"/>
</dbReference>
<dbReference type="PROSITE" id="PS50011">
    <property type="entry name" value="PROTEIN_KINASE_DOM"/>
    <property type="match status" value="1"/>
</dbReference>
<gene>
    <name evidence="4" type="primary">BSK6</name>
    <name evidence="7" type="ordered locus">At3g54030</name>
    <name evidence="8" type="ORF">F5K20_330</name>
</gene>
<evidence type="ECO:0000255" key="1">
    <source>
        <dbReference type="PROSITE-ProRule" id="PRU00159"/>
    </source>
</evidence>
<evidence type="ECO:0000269" key="2">
    <source>
    </source>
</evidence>
<evidence type="ECO:0000269" key="3">
    <source>
    </source>
</evidence>
<evidence type="ECO:0000303" key="4">
    <source>
    </source>
</evidence>
<evidence type="ECO:0000305" key="5"/>
<evidence type="ECO:0000305" key="6">
    <source>
    </source>
</evidence>
<evidence type="ECO:0000312" key="7">
    <source>
        <dbReference type="Araport" id="AT3G54030"/>
    </source>
</evidence>
<evidence type="ECO:0000312" key="8">
    <source>
        <dbReference type="EMBL" id="CAB88365.1"/>
    </source>
</evidence>
<evidence type="ECO:0007744" key="9">
    <source>
    </source>
</evidence>
<evidence type="ECO:0007744" key="10">
    <source>
    </source>
</evidence>
<evidence type="ECO:0007744" key="11">
    <source>
    </source>
</evidence>
<accession>Q9M324</accession>
<accession>Q8LEG7</accession>
<organism>
    <name type="scientific">Arabidopsis thaliana</name>
    <name type="common">Mouse-ear cress</name>
    <dbReference type="NCBI Taxonomy" id="3702"/>
    <lineage>
        <taxon>Eukaryota</taxon>
        <taxon>Viridiplantae</taxon>
        <taxon>Streptophyta</taxon>
        <taxon>Embryophyta</taxon>
        <taxon>Tracheophyta</taxon>
        <taxon>Spermatophyta</taxon>
        <taxon>Magnoliopsida</taxon>
        <taxon>eudicotyledons</taxon>
        <taxon>Gunneridae</taxon>
        <taxon>Pentapetalae</taxon>
        <taxon>rosids</taxon>
        <taxon>malvids</taxon>
        <taxon>Brassicales</taxon>
        <taxon>Brassicaceae</taxon>
        <taxon>Camelineae</taxon>
        <taxon>Arabidopsis</taxon>
    </lineage>
</organism>
<name>BSK6_ARATH</name>
<keyword id="KW-0067">ATP-binding</keyword>
<keyword id="KW-1070">Brassinosteroid signaling pathway</keyword>
<keyword id="KW-1003">Cell membrane</keyword>
<keyword id="KW-0418">Kinase</keyword>
<keyword id="KW-0449">Lipoprotein</keyword>
<keyword id="KW-0472">Membrane</keyword>
<keyword id="KW-0519">Myristate</keyword>
<keyword id="KW-0547">Nucleotide-binding</keyword>
<keyword id="KW-0597">Phosphoprotein</keyword>
<keyword id="KW-1185">Reference proteome</keyword>
<keyword id="KW-0723">Serine/threonine-protein kinase</keyword>
<keyword id="KW-0808">Transferase</keyword>
<reference key="1">
    <citation type="journal article" date="2000" name="Nature">
        <title>Sequence and analysis of chromosome 3 of the plant Arabidopsis thaliana.</title>
        <authorList>
            <person name="Salanoubat M."/>
            <person name="Lemcke K."/>
            <person name="Rieger M."/>
            <person name="Ansorge W."/>
            <person name="Unseld M."/>
            <person name="Fartmann B."/>
            <person name="Valle G."/>
            <person name="Bloecker H."/>
            <person name="Perez-Alonso M."/>
            <person name="Obermaier B."/>
            <person name="Delseny M."/>
            <person name="Boutry M."/>
            <person name="Grivell L.A."/>
            <person name="Mache R."/>
            <person name="Puigdomenech P."/>
            <person name="De Simone V."/>
            <person name="Choisne N."/>
            <person name="Artiguenave F."/>
            <person name="Robert C."/>
            <person name="Brottier P."/>
            <person name="Wincker P."/>
            <person name="Cattolico L."/>
            <person name="Weissenbach J."/>
            <person name="Saurin W."/>
            <person name="Quetier F."/>
            <person name="Schaefer M."/>
            <person name="Mueller-Auer S."/>
            <person name="Gabel C."/>
            <person name="Fuchs M."/>
            <person name="Benes V."/>
            <person name="Wurmbach E."/>
            <person name="Drzonek H."/>
            <person name="Erfle H."/>
            <person name="Jordan N."/>
            <person name="Bangert S."/>
            <person name="Wiedelmann R."/>
            <person name="Kranz H."/>
            <person name="Voss H."/>
            <person name="Holland R."/>
            <person name="Brandt P."/>
            <person name="Nyakatura G."/>
            <person name="Vezzi A."/>
            <person name="D'Angelo M."/>
            <person name="Pallavicini A."/>
            <person name="Toppo S."/>
            <person name="Simionati B."/>
            <person name="Conrad A."/>
            <person name="Hornischer K."/>
            <person name="Kauer G."/>
            <person name="Loehnert T.-H."/>
            <person name="Nordsiek G."/>
            <person name="Reichelt J."/>
            <person name="Scharfe M."/>
            <person name="Schoen O."/>
            <person name="Bargues M."/>
            <person name="Terol J."/>
            <person name="Climent J."/>
            <person name="Navarro P."/>
            <person name="Collado C."/>
            <person name="Perez-Perez A."/>
            <person name="Ottenwaelder B."/>
            <person name="Duchemin D."/>
            <person name="Cooke R."/>
            <person name="Laudie M."/>
            <person name="Berger-Llauro C."/>
            <person name="Purnelle B."/>
            <person name="Masuy D."/>
            <person name="de Haan M."/>
            <person name="Maarse A.C."/>
            <person name="Alcaraz J.-P."/>
            <person name="Cottet A."/>
            <person name="Casacuberta E."/>
            <person name="Monfort A."/>
            <person name="Argiriou A."/>
            <person name="Flores M."/>
            <person name="Liguori R."/>
            <person name="Vitale D."/>
            <person name="Mannhaupt G."/>
            <person name="Haase D."/>
            <person name="Schoof H."/>
            <person name="Rudd S."/>
            <person name="Zaccaria P."/>
            <person name="Mewes H.-W."/>
            <person name="Mayer K.F.X."/>
            <person name="Kaul S."/>
            <person name="Town C.D."/>
            <person name="Koo H.L."/>
            <person name="Tallon L.J."/>
            <person name="Jenkins J."/>
            <person name="Rooney T."/>
            <person name="Rizzo M."/>
            <person name="Walts A."/>
            <person name="Utterback T."/>
            <person name="Fujii C.Y."/>
            <person name="Shea T.P."/>
            <person name="Creasy T.H."/>
            <person name="Haas B."/>
            <person name="Maiti R."/>
            <person name="Wu D."/>
            <person name="Peterson J."/>
            <person name="Van Aken S."/>
            <person name="Pai G."/>
            <person name="Militscher J."/>
            <person name="Sellers P."/>
            <person name="Gill J.E."/>
            <person name="Feldblyum T.V."/>
            <person name="Preuss D."/>
            <person name="Lin X."/>
            <person name="Nierman W.C."/>
            <person name="Salzberg S.L."/>
            <person name="White O."/>
            <person name="Venter J.C."/>
            <person name="Fraser C.M."/>
            <person name="Kaneko T."/>
            <person name="Nakamura Y."/>
            <person name="Sato S."/>
            <person name="Kato T."/>
            <person name="Asamizu E."/>
            <person name="Sasamoto S."/>
            <person name="Kimura T."/>
            <person name="Idesawa K."/>
            <person name="Kawashima K."/>
            <person name="Kishida Y."/>
            <person name="Kiyokawa C."/>
            <person name="Kohara M."/>
            <person name="Matsumoto M."/>
            <person name="Matsuno A."/>
            <person name="Muraki A."/>
            <person name="Nakayama S."/>
            <person name="Nakazaki N."/>
            <person name="Shinpo S."/>
            <person name="Takeuchi C."/>
            <person name="Wada T."/>
            <person name="Watanabe A."/>
            <person name="Yamada M."/>
            <person name="Yasuda M."/>
            <person name="Tabata S."/>
        </authorList>
    </citation>
    <scope>NUCLEOTIDE SEQUENCE [LARGE SCALE GENOMIC DNA]</scope>
    <source>
        <strain>cv. Columbia</strain>
    </source>
</reference>
<reference key="2">
    <citation type="journal article" date="2017" name="Plant J.">
        <title>Araport11: a complete reannotation of the Arabidopsis thaliana reference genome.</title>
        <authorList>
            <person name="Cheng C.Y."/>
            <person name="Krishnakumar V."/>
            <person name="Chan A.P."/>
            <person name="Thibaud-Nissen F."/>
            <person name="Schobel S."/>
            <person name="Town C.D."/>
        </authorList>
    </citation>
    <scope>GENOME REANNOTATION</scope>
    <source>
        <strain>cv. Columbia</strain>
    </source>
</reference>
<reference key="3">
    <citation type="journal article" date="2003" name="Science">
        <title>Empirical analysis of transcriptional activity in the Arabidopsis genome.</title>
        <authorList>
            <person name="Yamada K."/>
            <person name="Lim J."/>
            <person name="Dale J.M."/>
            <person name="Chen H."/>
            <person name="Shinn P."/>
            <person name="Palm C.J."/>
            <person name="Southwick A.M."/>
            <person name="Wu H.C."/>
            <person name="Kim C.J."/>
            <person name="Nguyen M."/>
            <person name="Pham P.K."/>
            <person name="Cheuk R.F."/>
            <person name="Karlin-Newmann G."/>
            <person name="Liu S.X."/>
            <person name="Lam B."/>
            <person name="Sakano H."/>
            <person name="Wu T."/>
            <person name="Yu G."/>
            <person name="Miranda M."/>
            <person name="Quach H.L."/>
            <person name="Tripp M."/>
            <person name="Chang C.H."/>
            <person name="Lee J.M."/>
            <person name="Toriumi M.J."/>
            <person name="Chan M.M."/>
            <person name="Tang C.C."/>
            <person name="Onodera C.S."/>
            <person name="Deng J.M."/>
            <person name="Akiyama K."/>
            <person name="Ansari Y."/>
            <person name="Arakawa T."/>
            <person name="Banh J."/>
            <person name="Banno F."/>
            <person name="Bowser L."/>
            <person name="Brooks S.Y."/>
            <person name="Carninci P."/>
            <person name="Chao Q."/>
            <person name="Choy N."/>
            <person name="Enju A."/>
            <person name="Goldsmith A.D."/>
            <person name="Gurjal M."/>
            <person name="Hansen N.F."/>
            <person name="Hayashizaki Y."/>
            <person name="Johnson-Hopson C."/>
            <person name="Hsuan V.W."/>
            <person name="Iida K."/>
            <person name="Karnes M."/>
            <person name="Khan S."/>
            <person name="Koesema E."/>
            <person name="Ishida J."/>
            <person name="Jiang P.X."/>
            <person name="Jones T."/>
            <person name="Kawai J."/>
            <person name="Kamiya A."/>
            <person name="Meyers C."/>
            <person name="Nakajima M."/>
            <person name="Narusaka M."/>
            <person name="Seki M."/>
            <person name="Sakurai T."/>
            <person name="Satou M."/>
            <person name="Tamse R."/>
            <person name="Vaysberg M."/>
            <person name="Wallender E.K."/>
            <person name="Wong C."/>
            <person name="Yamamura Y."/>
            <person name="Yuan S."/>
            <person name="Shinozaki K."/>
            <person name="Davis R.W."/>
            <person name="Theologis A."/>
            <person name="Ecker J.R."/>
        </authorList>
    </citation>
    <scope>NUCLEOTIDE SEQUENCE [LARGE SCALE MRNA]</scope>
    <source>
        <strain>cv. Columbia</strain>
    </source>
</reference>
<reference key="4">
    <citation type="submission" date="2002-03" db="EMBL/GenBank/DDBJ databases">
        <title>Full-length cDNA from Arabidopsis thaliana.</title>
        <authorList>
            <person name="Brover V.V."/>
            <person name="Troukhan M.E."/>
            <person name="Alexandrov N.A."/>
            <person name="Lu Y.-P."/>
            <person name="Flavell R.B."/>
            <person name="Feldmann K.A."/>
        </authorList>
    </citation>
    <scope>NUCLEOTIDE SEQUENCE [LARGE SCALE MRNA]</scope>
</reference>
<reference key="5">
    <citation type="journal article" date="2003" name="J. Biol. Chem.">
        <title>Unexpected protein families including cell defense components feature in the N-myristoylome of a higher eukaryote.</title>
        <authorList>
            <person name="Boisson B."/>
            <person name="Giglione C."/>
            <person name="Meinnel T."/>
        </authorList>
    </citation>
    <scope>MYRISTOYLATION AT GLY-2</scope>
</reference>
<reference key="6">
    <citation type="journal article" date="2003" name="Mol. Cell. Proteomics">
        <title>Large-scale analysis of in vivo phosphorylated membrane proteins by immobilized metal ion affinity chromatography and mass spectrometry.</title>
        <authorList>
            <person name="Nuehse T.S."/>
            <person name="Stensballe A."/>
            <person name="Jensen O.N."/>
            <person name="Peck S.C."/>
        </authorList>
    </citation>
    <scope>PHOSPHORYLATION [LARGE SCALE ANALYSIS] AT SER-25</scope>
    <scope>IDENTIFICATION BY MASS SPECTROMETRY [LARGE SCALE ANALYSIS]</scope>
    <source>
        <strain>cv. La-0</strain>
    </source>
</reference>
<reference key="7">
    <citation type="journal article" date="2004" name="Plant Cell">
        <title>Phosphoproteomics of the Arabidopsis plasma membrane and a new phosphorylation site database.</title>
        <authorList>
            <person name="Nuehse T.S."/>
            <person name="Stensballe A."/>
            <person name="Jensen O.N."/>
            <person name="Peck S.C."/>
        </authorList>
    </citation>
    <scope>PHOSPHORYLATION [LARGE SCALE ANALYSIS] AT SER-25 AND SER-373</scope>
    <scope>IDENTIFICATION BY MASS SPECTROMETRY [LARGE SCALE ANALYSIS]</scope>
</reference>
<reference key="8">
    <citation type="journal article" date="2009" name="J. Proteomics">
        <title>Phosphoproteomic analysis of nuclei-enriched fractions from Arabidopsis thaliana.</title>
        <authorList>
            <person name="Jones A.M.E."/>
            <person name="MacLean D."/>
            <person name="Studholme D.J."/>
            <person name="Serna-Sanz A."/>
            <person name="Andreasson E."/>
            <person name="Rathjen J.P."/>
            <person name="Peck S.C."/>
        </authorList>
    </citation>
    <scope>PHOSPHORYLATION [LARGE SCALE ANALYSIS] AT SER-25</scope>
    <scope>IDENTIFICATION BY MASS SPECTROMETRY [LARGE SCALE ANALYSIS]</scope>
    <source>
        <strain>cv. Columbia</strain>
    </source>
</reference>
<reference key="9">
    <citation type="journal article" date="2013" name="Plant J.">
        <title>BSKs are partially redundant positive regulators of brassinosteroid signaling in Arabidopsis.</title>
        <authorList>
            <person name="Sreeramulu S."/>
            <person name="Mostizky Y."/>
            <person name="Sunitha S."/>
            <person name="Shani E."/>
            <person name="Nahum H."/>
            <person name="Salomon D."/>
            <person name="Hayun L.B."/>
            <person name="Gruetter C."/>
            <person name="Rauh D."/>
            <person name="Ori N."/>
            <person name="Sessa G."/>
        </authorList>
    </citation>
    <scope>FUNCTION</scope>
    <scope>INTERACTION WITH BRI1; ASK7/BIN2; ASK9/BIL2; BSK1; BSK5; BSK8 AND BSK11</scope>
    <scope>PHOSPHORYLATION</scope>
    <scope>MUTAGENESIS OF SER-210</scope>
</reference>
<comment type="function">
    <text evidence="3">Probable serine/threonine kinase that acts as a positive regulator of brassinosteroid (BR) signaling downstream of the receptor kinase BRI1. Functions redundantly with BSK3, BSK4, BSK7 and BSK8.</text>
</comment>
<comment type="catalytic activity">
    <reaction evidence="5">
        <text>L-seryl-[protein] + ATP = O-phospho-L-seryl-[protein] + ADP + H(+)</text>
        <dbReference type="Rhea" id="RHEA:17989"/>
        <dbReference type="Rhea" id="RHEA-COMP:9863"/>
        <dbReference type="Rhea" id="RHEA-COMP:11604"/>
        <dbReference type="ChEBI" id="CHEBI:15378"/>
        <dbReference type="ChEBI" id="CHEBI:29999"/>
        <dbReference type="ChEBI" id="CHEBI:30616"/>
        <dbReference type="ChEBI" id="CHEBI:83421"/>
        <dbReference type="ChEBI" id="CHEBI:456216"/>
        <dbReference type="EC" id="2.7.11.1"/>
    </reaction>
</comment>
<comment type="catalytic activity">
    <reaction evidence="5">
        <text>L-threonyl-[protein] + ATP = O-phospho-L-threonyl-[protein] + ADP + H(+)</text>
        <dbReference type="Rhea" id="RHEA:46608"/>
        <dbReference type="Rhea" id="RHEA-COMP:11060"/>
        <dbReference type="Rhea" id="RHEA-COMP:11605"/>
        <dbReference type="ChEBI" id="CHEBI:15378"/>
        <dbReference type="ChEBI" id="CHEBI:30013"/>
        <dbReference type="ChEBI" id="CHEBI:30616"/>
        <dbReference type="ChEBI" id="CHEBI:61977"/>
        <dbReference type="ChEBI" id="CHEBI:456216"/>
        <dbReference type="EC" id="2.7.11.1"/>
    </reaction>
</comment>
<comment type="subunit">
    <text evidence="3">Interacts with BRI1, ASK7/BIN2, ASK9/BIL2, BSK1, BSK5, BSK8 and BSK11.</text>
</comment>
<comment type="subcellular location">
    <subcellularLocation>
        <location evidence="6">Cell membrane</location>
        <topology evidence="6">Lipid-anchor</topology>
    </subcellularLocation>
</comment>
<comment type="PTM">
    <text evidence="3">Phosphorylated by BRI1, ASK7/BIN2 and ASK9/BIL2.</text>
</comment>
<comment type="similarity">
    <text evidence="5">Belongs to the protein kinase superfamily. Ser/Thr protein kinase family.</text>
</comment>
<sequence>MGARCSKFSFCLFPSHFKSASVLESPDIENGGKVWPTFKEFKLEQLKSATGGFSSDNIVSEHGEKAPNVVYRGRLDDGRLIAVKRFNRLAWADHRQFLDEAKAVGSLRSDRLANLIGCCFEGEERLLVAEFMPHETLAKHLFHWENNPMKWAMRLRVALCLAQALEYCSNKGRALYHDLNAYRVLFDKDGNPRLSCFGLMKNSRDGKSYSTNLAFTPPEYLRTGRVTPESVVFSFGTVLLDLMSGKHIPPSHALDLIRGKNCAMLMDSALEGHFSNEDGTELVRLATRCLQYEARERPNVKSLVTSLVTLQKESDVASYVLMGIPHETEAEEESPLSLTPFGDACLRVDLTAIQEILSKIGYKDDEGIANELSFQMWTNQMQESLNSKKQGDLAFRSKDFTTAVDCYTQFIDGGTMVSPTVHARRCLSYLMNDNAQEALTDALQAQVVSPDWPTALYLQAACLFKLGMEADAQQALKDGTTLEAKKSNKR</sequence>